<feature type="chain" id="PRO_0000153510" description="Aromatic amino acid aminotransferase">
    <location>
        <begin position="1"/>
        <end position="344"/>
    </location>
</feature>
<feature type="modified residue" description="N6-(pyridoxal phosphate)lysine" evidence="1">
    <location>
        <position position="213"/>
    </location>
</feature>
<reference key="1">
    <citation type="journal article" date="2003" name="Nucleic Acids Res.">
        <title>The complete genome sequence and analysis of Corynebacterium diphtheriae NCTC13129.</title>
        <authorList>
            <person name="Cerdeno-Tarraga A.-M."/>
            <person name="Efstratiou A."/>
            <person name="Dover L.G."/>
            <person name="Holden M.T.G."/>
            <person name="Pallen M.J."/>
            <person name="Bentley S.D."/>
            <person name="Besra G.S."/>
            <person name="Churcher C.M."/>
            <person name="James K.D."/>
            <person name="De Zoysa A."/>
            <person name="Chillingworth T."/>
            <person name="Cronin A."/>
            <person name="Dowd L."/>
            <person name="Feltwell T."/>
            <person name="Hamlin N."/>
            <person name="Holroyd S."/>
            <person name="Jagels K."/>
            <person name="Moule S."/>
            <person name="Quail M.A."/>
            <person name="Rabbinowitsch E."/>
            <person name="Rutherford K.M."/>
            <person name="Thomson N.R."/>
            <person name="Unwin L."/>
            <person name="Whitehead S."/>
            <person name="Barrell B.G."/>
            <person name="Parkhill J."/>
        </authorList>
    </citation>
    <scope>NUCLEOTIDE SEQUENCE [LARGE SCALE GENOMIC DNA]</scope>
    <source>
        <strain>ATCC 700971 / NCTC 13129 / Biotype gravis</strain>
    </source>
</reference>
<evidence type="ECO:0000255" key="1">
    <source>
        <dbReference type="HAMAP-Rule" id="MF_01513"/>
    </source>
</evidence>
<name>PATR_CORDI</name>
<organism>
    <name type="scientific">Corynebacterium diphtheriae (strain ATCC 700971 / NCTC 13129 / Biotype gravis)</name>
    <dbReference type="NCBI Taxonomy" id="257309"/>
    <lineage>
        <taxon>Bacteria</taxon>
        <taxon>Bacillati</taxon>
        <taxon>Actinomycetota</taxon>
        <taxon>Actinomycetes</taxon>
        <taxon>Mycobacteriales</taxon>
        <taxon>Corynebacteriaceae</taxon>
        <taxon>Corynebacterium</taxon>
    </lineage>
</organism>
<proteinExistence type="inferred from homology"/>
<dbReference type="EC" id="2.6.1.57" evidence="1"/>
<dbReference type="EMBL" id="BX248354">
    <property type="protein sequence ID" value="CAE48682.1"/>
    <property type="molecule type" value="Genomic_DNA"/>
</dbReference>
<dbReference type="SMR" id="P61004"/>
<dbReference type="STRING" id="257309.DIP0178"/>
<dbReference type="KEGG" id="cdi:DIP0178"/>
<dbReference type="HOGENOM" id="CLU_017584_3_3_11"/>
<dbReference type="Proteomes" id="UP000002198">
    <property type="component" value="Chromosome"/>
</dbReference>
<dbReference type="GO" id="GO:0008793">
    <property type="term" value="F:aromatic-amino-acid transaminase activity"/>
    <property type="evidence" value="ECO:0007669"/>
    <property type="project" value="UniProtKB-UniRule"/>
</dbReference>
<dbReference type="GO" id="GO:0004400">
    <property type="term" value="F:histidinol-phosphate transaminase activity"/>
    <property type="evidence" value="ECO:0007669"/>
    <property type="project" value="InterPro"/>
</dbReference>
<dbReference type="GO" id="GO:0030170">
    <property type="term" value="F:pyridoxal phosphate binding"/>
    <property type="evidence" value="ECO:0007669"/>
    <property type="project" value="UniProtKB-UniRule"/>
</dbReference>
<dbReference type="GO" id="GO:0000105">
    <property type="term" value="P:L-histidine biosynthetic process"/>
    <property type="evidence" value="ECO:0007669"/>
    <property type="project" value="InterPro"/>
</dbReference>
<dbReference type="CDD" id="cd00609">
    <property type="entry name" value="AAT_like"/>
    <property type="match status" value="1"/>
</dbReference>
<dbReference type="Gene3D" id="3.90.1150.10">
    <property type="entry name" value="Aspartate Aminotransferase, domain 1"/>
    <property type="match status" value="1"/>
</dbReference>
<dbReference type="Gene3D" id="3.40.640.10">
    <property type="entry name" value="Type I PLP-dependent aspartate aminotransferase-like (Major domain)"/>
    <property type="match status" value="1"/>
</dbReference>
<dbReference type="HAMAP" id="MF_01023">
    <property type="entry name" value="HisC_aminotrans_2"/>
    <property type="match status" value="1"/>
</dbReference>
<dbReference type="HAMAP" id="MF_01513">
    <property type="entry name" value="Phe_aminotrans_2"/>
    <property type="match status" value="1"/>
</dbReference>
<dbReference type="InterPro" id="IPR001917">
    <property type="entry name" value="Aminotrans_II_pyridoxalP_BS"/>
</dbReference>
<dbReference type="InterPro" id="IPR004839">
    <property type="entry name" value="Aminotransferase_I/II_large"/>
</dbReference>
<dbReference type="InterPro" id="IPR024892">
    <property type="entry name" value="ArAT"/>
</dbReference>
<dbReference type="InterPro" id="IPR005861">
    <property type="entry name" value="HisP_aminotrans"/>
</dbReference>
<dbReference type="InterPro" id="IPR050106">
    <property type="entry name" value="HistidinolP_aminotransfase"/>
</dbReference>
<dbReference type="InterPro" id="IPR015424">
    <property type="entry name" value="PyrdxlP-dep_Trfase"/>
</dbReference>
<dbReference type="InterPro" id="IPR015421">
    <property type="entry name" value="PyrdxlP-dep_Trfase_major"/>
</dbReference>
<dbReference type="InterPro" id="IPR015422">
    <property type="entry name" value="PyrdxlP-dep_Trfase_small"/>
</dbReference>
<dbReference type="NCBIfam" id="TIGR01141">
    <property type="entry name" value="hisC"/>
    <property type="match status" value="1"/>
</dbReference>
<dbReference type="NCBIfam" id="NF002878">
    <property type="entry name" value="PRK03321.1"/>
    <property type="match status" value="1"/>
</dbReference>
<dbReference type="PANTHER" id="PTHR43643:SF3">
    <property type="entry name" value="HISTIDINOL-PHOSPHATE AMINOTRANSFERASE"/>
    <property type="match status" value="1"/>
</dbReference>
<dbReference type="PANTHER" id="PTHR43643">
    <property type="entry name" value="HISTIDINOL-PHOSPHATE AMINOTRANSFERASE 2"/>
    <property type="match status" value="1"/>
</dbReference>
<dbReference type="Pfam" id="PF00155">
    <property type="entry name" value="Aminotran_1_2"/>
    <property type="match status" value="1"/>
</dbReference>
<dbReference type="SUPFAM" id="SSF53383">
    <property type="entry name" value="PLP-dependent transferases"/>
    <property type="match status" value="1"/>
</dbReference>
<dbReference type="PROSITE" id="PS00599">
    <property type="entry name" value="AA_TRANSFER_CLASS_2"/>
    <property type="match status" value="1"/>
</dbReference>
<gene>
    <name evidence="1" type="primary">pat</name>
    <name type="ordered locus">DIP0178</name>
</gene>
<comment type="function">
    <text evidence="1">Aminotransferase that catalyzes the conversion of aromatic amino acids and 2-oxoglutarate into corresponding aromatic oxo acids and L-glutamate.</text>
</comment>
<comment type="catalytic activity">
    <reaction evidence="1">
        <text>an aromatic L-alpha-amino acid + 2-oxoglutarate = an aromatic oxo-acid + L-glutamate</text>
        <dbReference type="Rhea" id="RHEA:17533"/>
        <dbReference type="ChEBI" id="CHEBI:16810"/>
        <dbReference type="ChEBI" id="CHEBI:29985"/>
        <dbReference type="ChEBI" id="CHEBI:73309"/>
        <dbReference type="ChEBI" id="CHEBI:84824"/>
        <dbReference type="EC" id="2.6.1.57"/>
    </reaction>
</comment>
<comment type="cofactor">
    <cofactor evidence="1">
        <name>pyridoxal 5'-phosphate</name>
        <dbReference type="ChEBI" id="CHEBI:597326"/>
    </cofactor>
</comment>
<comment type="subunit">
    <text evidence="1">Homodimer.</text>
</comment>
<comment type="similarity">
    <text evidence="1">Belongs to the class-II pyridoxal-phosphate-dependent aminotransferase family.</text>
</comment>
<keyword id="KW-0032">Aminotransferase</keyword>
<keyword id="KW-0663">Pyridoxal phosphate</keyword>
<keyword id="KW-1185">Reference proteome</keyword>
<keyword id="KW-0808">Transferase</keyword>
<protein>
    <recommendedName>
        <fullName evidence="1">Aromatic amino acid aminotransferase</fullName>
        <shortName evidence="1">ArAT</shortName>
        <ecNumber evidence="1">2.6.1.57</ecNumber>
    </recommendedName>
</protein>
<accession>P61004</accession>
<sequence length="344" mass="37000">MIRKDLSQIPTYVPGKRNDHALKLSSNEVTHRPLPSAAQAMAEAAAGANRYPDMGVTELRGALSEHLGVPAEQIAVGCGSSALCQQLVQITCTPGDEVVFPWRSFEAYPIFVQVVGATPVAVPLTSDGFNDLDAMAAAITPKTKLVFVCNPNNPSGTVVRREAFLEFMAKVPADVVVALDEAYTEYVRDEDTIFATEILSEFPNLVGLRTFSKAFGLAGVRVGYAFGPHELIDALNKVALPFGVNAVGQAGALASLNNLDELMEHTEEVVAVRDRVADHIGAAHSQANFVWIPAESRSETPFEIAEKLAAHDVLVRAFPEGVRITVTNEEESDRLLAAWDASFA</sequence>